<organism>
    <name type="scientific">Aeromonas salmonicida (strain A449)</name>
    <dbReference type="NCBI Taxonomy" id="382245"/>
    <lineage>
        <taxon>Bacteria</taxon>
        <taxon>Pseudomonadati</taxon>
        <taxon>Pseudomonadota</taxon>
        <taxon>Gammaproteobacteria</taxon>
        <taxon>Aeromonadales</taxon>
        <taxon>Aeromonadaceae</taxon>
        <taxon>Aeromonas</taxon>
    </lineage>
</organism>
<reference key="1">
    <citation type="journal article" date="2008" name="BMC Genomics">
        <title>The genome of Aeromonas salmonicida subsp. salmonicida A449: insights into the evolution of a fish pathogen.</title>
        <authorList>
            <person name="Reith M.E."/>
            <person name="Singh R.K."/>
            <person name="Curtis B."/>
            <person name="Boyd J.M."/>
            <person name="Bouevitch A."/>
            <person name="Kimball J."/>
            <person name="Munholland J."/>
            <person name="Murphy C."/>
            <person name="Sarty D."/>
            <person name="Williams J."/>
            <person name="Nash J.H."/>
            <person name="Johnson S.C."/>
            <person name="Brown L.L."/>
        </authorList>
    </citation>
    <scope>NUCLEOTIDE SEQUENCE [LARGE SCALE GENOMIC DNA]</scope>
    <source>
        <strain>A449</strain>
    </source>
</reference>
<sequence length="266" mass="29625">MRLIPLKSASQVGLWSARYIVDRINGFKPTADRPFVLGLPTGGTPLNTYKRLIELHKAGEVSFEHVATFNMDEYVGLPEDHPESYHSFMHNNFFCHIDIRPENINILNGNAEDLVAECKRYEDKIKSYGKINLFMGGVGNDGHIAFNEPASSLSSRTRVKTLTEDTRIANSRFFGGDMEQVPKLALTVGVGTLMDAEEIMILVTGHGKAQALQAAVEGSVNHMWTISTLQLHPKGMMVCDEPSTMELKVKTVRYFQQLEAANIGRL</sequence>
<protein>
    <recommendedName>
        <fullName evidence="1">Glucosamine-6-phosphate deaminase</fullName>
        <ecNumber evidence="1">3.5.99.6</ecNumber>
    </recommendedName>
    <alternativeName>
        <fullName evidence="1">GlcN6P deaminase</fullName>
        <shortName evidence="1">GNPDA</shortName>
    </alternativeName>
    <alternativeName>
        <fullName evidence="1">Glucosamine-6-phosphate isomerase</fullName>
    </alternativeName>
</protein>
<feature type="chain" id="PRO_1000066949" description="Glucosamine-6-phosphate deaminase">
    <location>
        <begin position="1"/>
        <end position="266"/>
    </location>
</feature>
<feature type="active site" description="Proton acceptor; for enolization step" evidence="1">
    <location>
        <position position="72"/>
    </location>
</feature>
<feature type="active site" description="For ring-opening step" evidence="1">
    <location>
        <position position="141"/>
    </location>
</feature>
<feature type="active site" description="Proton acceptor; for ring-opening step" evidence="1">
    <location>
        <position position="143"/>
    </location>
</feature>
<feature type="active site" description="For ring-opening step" evidence="1">
    <location>
        <position position="148"/>
    </location>
</feature>
<feature type="site" description="Part of the allosteric site" evidence="1">
    <location>
        <position position="151"/>
    </location>
</feature>
<feature type="site" description="Part of the allosteric site" evidence="1">
    <location>
        <position position="158"/>
    </location>
</feature>
<feature type="site" description="Part of the allosteric site" evidence="1">
    <location>
        <position position="160"/>
    </location>
</feature>
<feature type="site" description="Part of the allosteric site" evidence="1">
    <location>
        <position position="161"/>
    </location>
</feature>
<feature type="site" description="Part of the allosteric site" evidence="1">
    <location>
        <position position="254"/>
    </location>
</feature>
<proteinExistence type="inferred from homology"/>
<dbReference type="EC" id="3.5.99.6" evidence="1"/>
<dbReference type="EMBL" id="CP000644">
    <property type="protein sequence ID" value="ABO90844.1"/>
    <property type="molecule type" value="Genomic_DNA"/>
</dbReference>
<dbReference type="RefSeq" id="WP_005309680.1">
    <property type="nucleotide sequence ID" value="NC_009348.1"/>
</dbReference>
<dbReference type="SMR" id="A4SPM2"/>
<dbReference type="STRING" id="29491.GCA_000820065_01078"/>
<dbReference type="KEGG" id="asa:ASA_2828"/>
<dbReference type="PATRIC" id="fig|382245.13.peg.2801"/>
<dbReference type="eggNOG" id="COG0363">
    <property type="taxonomic scope" value="Bacteria"/>
</dbReference>
<dbReference type="HOGENOM" id="CLU_049611_0_1_6"/>
<dbReference type="UniPathway" id="UPA00629">
    <property type="reaction ID" value="UER00684"/>
</dbReference>
<dbReference type="Proteomes" id="UP000000225">
    <property type="component" value="Chromosome"/>
</dbReference>
<dbReference type="GO" id="GO:0005737">
    <property type="term" value="C:cytoplasm"/>
    <property type="evidence" value="ECO:0007669"/>
    <property type="project" value="TreeGrafter"/>
</dbReference>
<dbReference type="GO" id="GO:0004342">
    <property type="term" value="F:glucosamine-6-phosphate deaminase activity"/>
    <property type="evidence" value="ECO:0007669"/>
    <property type="project" value="UniProtKB-UniRule"/>
</dbReference>
<dbReference type="GO" id="GO:0042802">
    <property type="term" value="F:identical protein binding"/>
    <property type="evidence" value="ECO:0007669"/>
    <property type="project" value="TreeGrafter"/>
</dbReference>
<dbReference type="GO" id="GO:0005975">
    <property type="term" value="P:carbohydrate metabolic process"/>
    <property type="evidence" value="ECO:0007669"/>
    <property type="project" value="InterPro"/>
</dbReference>
<dbReference type="GO" id="GO:0006043">
    <property type="term" value="P:glucosamine catabolic process"/>
    <property type="evidence" value="ECO:0007669"/>
    <property type="project" value="TreeGrafter"/>
</dbReference>
<dbReference type="GO" id="GO:0006046">
    <property type="term" value="P:N-acetylglucosamine catabolic process"/>
    <property type="evidence" value="ECO:0007669"/>
    <property type="project" value="TreeGrafter"/>
</dbReference>
<dbReference type="GO" id="GO:0019262">
    <property type="term" value="P:N-acetylneuraminate catabolic process"/>
    <property type="evidence" value="ECO:0007669"/>
    <property type="project" value="UniProtKB-UniRule"/>
</dbReference>
<dbReference type="CDD" id="cd01399">
    <property type="entry name" value="GlcN6P_deaminase"/>
    <property type="match status" value="1"/>
</dbReference>
<dbReference type="FunFam" id="3.40.50.1360:FF:000002">
    <property type="entry name" value="Glucosamine-6-phosphate deaminase"/>
    <property type="match status" value="1"/>
</dbReference>
<dbReference type="Gene3D" id="3.40.50.1360">
    <property type="match status" value="1"/>
</dbReference>
<dbReference type="HAMAP" id="MF_01241">
    <property type="entry name" value="GlcN6P_deamin"/>
    <property type="match status" value="1"/>
</dbReference>
<dbReference type="InterPro" id="IPR006148">
    <property type="entry name" value="Glc/Gal-6P_isomerase"/>
</dbReference>
<dbReference type="InterPro" id="IPR004547">
    <property type="entry name" value="Glucosamine6P_isomerase"/>
</dbReference>
<dbReference type="InterPro" id="IPR018321">
    <property type="entry name" value="Glucosamine6P_isomerase_CS"/>
</dbReference>
<dbReference type="InterPro" id="IPR037171">
    <property type="entry name" value="NagB/RpiA_transferase-like"/>
</dbReference>
<dbReference type="NCBIfam" id="TIGR00502">
    <property type="entry name" value="nagB"/>
    <property type="match status" value="1"/>
</dbReference>
<dbReference type="NCBIfam" id="NF001685">
    <property type="entry name" value="PRK00443.1-5"/>
    <property type="match status" value="1"/>
</dbReference>
<dbReference type="PANTHER" id="PTHR11280">
    <property type="entry name" value="GLUCOSAMINE-6-PHOSPHATE ISOMERASE"/>
    <property type="match status" value="1"/>
</dbReference>
<dbReference type="PANTHER" id="PTHR11280:SF5">
    <property type="entry name" value="GLUCOSAMINE-6-PHOSPHATE ISOMERASE"/>
    <property type="match status" value="1"/>
</dbReference>
<dbReference type="Pfam" id="PF01182">
    <property type="entry name" value="Glucosamine_iso"/>
    <property type="match status" value="1"/>
</dbReference>
<dbReference type="SUPFAM" id="SSF100950">
    <property type="entry name" value="NagB/RpiA/CoA transferase-like"/>
    <property type="match status" value="1"/>
</dbReference>
<dbReference type="PROSITE" id="PS01161">
    <property type="entry name" value="GLC_GALNAC_ISOMERASE"/>
    <property type="match status" value="1"/>
</dbReference>
<name>NAGB_AERS4</name>
<accession>A4SPM2</accession>
<gene>
    <name evidence="1" type="primary">nagB</name>
    <name type="ordered locus">ASA_2828</name>
</gene>
<keyword id="KW-0021">Allosteric enzyme</keyword>
<keyword id="KW-0119">Carbohydrate metabolism</keyword>
<keyword id="KW-0378">Hydrolase</keyword>
<comment type="function">
    <text evidence="1">Catalyzes the reversible isomerization-deamination of glucosamine 6-phosphate (GlcN6P) to form fructose 6-phosphate (Fru6P) and ammonium ion.</text>
</comment>
<comment type="catalytic activity">
    <reaction evidence="1">
        <text>alpha-D-glucosamine 6-phosphate + H2O = beta-D-fructose 6-phosphate + NH4(+)</text>
        <dbReference type="Rhea" id="RHEA:12172"/>
        <dbReference type="ChEBI" id="CHEBI:15377"/>
        <dbReference type="ChEBI" id="CHEBI:28938"/>
        <dbReference type="ChEBI" id="CHEBI:57634"/>
        <dbReference type="ChEBI" id="CHEBI:75989"/>
        <dbReference type="EC" id="3.5.99.6"/>
    </reaction>
</comment>
<comment type="activity regulation">
    <text evidence="1">Allosterically activated by N-acetylglucosamine 6-phosphate (GlcNAc6P).</text>
</comment>
<comment type="pathway">
    <text evidence="1">Amino-sugar metabolism; N-acetylneuraminate degradation; D-fructose 6-phosphate from N-acetylneuraminate: step 5/5.</text>
</comment>
<comment type="subunit">
    <text evidence="1">Homohexamer.</text>
</comment>
<comment type="similarity">
    <text evidence="1">Belongs to the glucosamine/galactosamine-6-phosphate isomerase family. NagB subfamily.</text>
</comment>
<evidence type="ECO:0000255" key="1">
    <source>
        <dbReference type="HAMAP-Rule" id="MF_01241"/>
    </source>
</evidence>